<geneLocation type="chloroplast"/>
<dbReference type="EC" id="2.7.7.6" evidence="1"/>
<dbReference type="EMBL" id="AF137379">
    <property type="protein sequence ID" value="AAD54810.1"/>
    <property type="molecule type" value="Genomic_DNA"/>
</dbReference>
<dbReference type="RefSeq" id="NP_050839.1">
    <property type="nucleotide sequence ID" value="NC_000927.1"/>
</dbReference>
<dbReference type="SMR" id="Q9TL06"/>
<dbReference type="GeneID" id="801913"/>
<dbReference type="GO" id="GO:0009507">
    <property type="term" value="C:chloroplast"/>
    <property type="evidence" value="ECO:0007669"/>
    <property type="project" value="UniProtKB-SubCell"/>
</dbReference>
<dbReference type="GO" id="GO:0000428">
    <property type="term" value="C:DNA-directed RNA polymerase complex"/>
    <property type="evidence" value="ECO:0007669"/>
    <property type="project" value="UniProtKB-KW"/>
</dbReference>
<dbReference type="GO" id="GO:0005739">
    <property type="term" value="C:mitochondrion"/>
    <property type="evidence" value="ECO:0007669"/>
    <property type="project" value="GOC"/>
</dbReference>
<dbReference type="GO" id="GO:0003677">
    <property type="term" value="F:DNA binding"/>
    <property type="evidence" value="ECO:0007669"/>
    <property type="project" value="UniProtKB-UniRule"/>
</dbReference>
<dbReference type="GO" id="GO:0003899">
    <property type="term" value="F:DNA-directed RNA polymerase activity"/>
    <property type="evidence" value="ECO:0007669"/>
    <property type="project" value="UniProtKB-UniRule"/>
</dbReference>
<dbReference type="GO" id="GO:0032549">
    <property type="term" value="F:ribonucleoside binding"/>
    <property type="evidence" value="ECO:0007669"/>
    <property type="project" value="InterPro"/>
</dbReference>
<dbReference type="GO" id="GO:0006351">
    <property type="term" value="P:DNA-templated transcription"/>
    <property type="evidence" value="ECO:0007669"/>
    <property type="project" value="UniProtKB-UniRule"/>
</dbReference>
<dbReference type="CDD" id="cd00653">
    <property type="entry name" value="RNA_pol_B_RPB2"/>
    <property type="match status" value="1"/>
</dbReference>
<dbReference type="Gene3D" id="2.40.50.100">
    <property type="match status" value="1"/>
</dbReference>
<dbReference type="Gene3D" id="2.40.50.150">
    <property type="match status" value="1"/>
</dbReference>
<dbReference type="Gene3D" id="3.90.1100.10">
    <property type="match status" value="1"/>
</dbReference>
<dbReference type="Gene3D" id="2.30.150.10">
    <property type="entry name" value="DNA-directed RNA polymerase, beta subunit, external 1 domain"/>
    <property type="match status" value="1"/>
</dbReference>
<dbReference type="Gene3D" id="2.40.270.10">
    <property type="entry name" value="DNA-directed RNA polymerase, subunit 2, domain 6"/>
    <property type="match status" value="1"/>
</dbReference>
<dbReference type="Gene3D" id="3.90.1800.10">
    <property type="entry name" value="RNA polymerase alpha subunit dimerisation domain"/>
    <property type="match status" value="1"/>
</dbReference>
<dbReference type="Gene3D" id="3.90.1110.10">
    <property type="entry name" value="RNA polymerase Rpb2, domain 2"/>
    <property type="match status" value="1"/>
</dbReference>
<dbReference type="HAMAP" id="MF_01321">
    <property type="entry name" value="RNApol_bact_RpoB"/>
    <property type="match status" value="1"/>
</dbReference>
<dbReference type="InterPro" id="IPR042107">
    <property type="entry name" value="DNA-dir_RNA_pol_bsu_ext_1_sf"/>
</dbReference>
<dbReference type="InterPro" id="IPR015712">
    <property type="entry name" value="DNA-dir_RNA_pol_su2"/>
</dbReference>
<dbReference type="InterPro" id="IPR007120">
    <property type="entry name" value="DNA-dir_RNAP_su2_dom"/>
</dbReference>
<dbReference type="InterPro" id="IPR037033">
    <property type="entry name" value="DNA-dir_RNAP_su2_hyb_sf"/>
</dbReference>
<dbReference type="InterPro" id="IPR010243">
    <property type="entry name" value="RNA_pol_bsu_bac"/>
</dbReference>
<dbReference type="InterPro" id="IPR007121">
    <property type="entry name" value="RNA_pol_bsu_CS"/>
</dbReference>
<dbReference type="InterPro" id="IPR007644">
    <property type="entry name" value="RNA_pol_bsu_protrusion"/>
</dbReference>
<dbReference type="InterPro" id="IPR007642">
    <property type="entry name" value="RNA_pol_Rpb2_2"/>
</dbReference>
<dbReference type="InterPro" id="IPR037034">
    <property type="entry name" value="RNA_pol_Rpb2_2_sf"/>
</dbReference>
<dbReference type="InterPro" id="IPR007645">
    <property type="entry name" value="RNA_pol_Rpb2_3"/>
</dbReference>
<dbReference type="InterPro" id="IPR007641">
    <property type="entry name" value="RNA_pol_Rpb2_7"/>
</dbReference>
<dbReference type="InterPro" id="IPR014724">
    <property type="entry name" value="RNA_pol_RPB2_OB-fold"/>
</dbReference>
<dbReference type="NCBIfam" id="NF001616">
    <property type="entry name" value="PRK00405.1"/>
    <property type="match status" value="1"/>
</dbReference>
<dbReference type="PANTHER" id="PTHR20856">
    <property type="entry name" value="DNA-DIRECTED RNA POLYMERASE I SUBUNIT 2"/>
    <property type="match status" value="1"/>
</dbReference>
<dbReference type="Pfam" id="PF04563">
    <property type="entry name" value="RNA_pol_Rpb2_1"/>
    <property type="match status" value="1"/>
</dbReference>
<dbReference type="Pfam" id="PF04561">
    <property type="entry name" value="RNA_pol_Rpb2_2"/>
    <property type="match status" value="1"/>
</dbReference>
<dbReference type="Pfam" id="PF04565">
    <property type="entry name" value="RNA_pol_Rpb2_3"/>
    <property type="match status" value="1"/>
</dbReference>
<dbReference type="Pfam" id="PF00562">
    <property type="entry name" value="RNA_pol_Rpb2_6"/>
    <property type="match status" value="1"/>
</dbReference>
<dbReference type="Pfam" id="PF04560">
    <property type="entry name" value="RNA_pol_Rpb2_7"/>
    <property type="match status" value="1"/>
</dbReference>
<dbReference type="SUPFAM" id="SSF64484">
    <property type="entry name" value="beta and beta-prime subunits of DNA dependent RNA-polymerase"/>
    <property type="match status" value="1"/>
</dbReference>
<dbReference type="PROSITE" id="PS01166">
    <property type="entry name" value="RNA_POL_BETA"/>
    <property type="match status" value="1"/>
</dbReference>
<keyword id="KW-0150">Chloroplast</keyword>
<keyword id="KW-0240">DNA-directed RNA polymerase</keyword>
<keyword id="KW-0548">Nucleotidyltransferase</keyword>
<keyword id="KW-0934">Plastid</keyword>
<keyword id="KW-0804">Transcription</keyword>
<keyword id="KW-0808">Transferase</keyword>
<organism>
    <name type="scientific">Nephroselmis olivacea</name>
    <name type="common">Green alga</name>
    <dbReference type="NCBI Taxonomy" id="31312"/>
    <lineage>
        <taxon>Eukaryota</taxon>
        <taxon>Viridiplantae</taxon>
        <taxon>Chlorophyta</taxon>
        <taxon>Nephroselmidophyceae</taxon>
        <taxon>Nephroselmidales</taxon>
        <taxon>Nephroselmidaceae</taxon>
        <taxon>Nephroselmis</taxon>
    </lineage>
</organism>
<accession>Q9TL06</accession>
<sequence>MIQNLQRKDSQWTPFILPDLISIQRDSFLLFLERGLATELSHVTPLTGSHFRITLCSHGYRLKRPKVSIQEAVYQATSYSAALYVNVETNQSNLGTQETQIQSVWMGDIPLMTSRGHFIINGSSRVVVNQIVRSPGIYFKEMIDQKHRRMFQASIISNRGSWVRLETDVDGMIWVRMDKAKKISILIVLEAMGLSKKTIFRSLKSPEFLFKALQQLLAKKRWQDKVYELIPQSTTDALFHLYTKLSPDKPGNTLTARRVLYEKLMDAKRYDVGLVGRVKLNKKLKLPVPEHVHTLRPVDFLAATDYLIGLEYGRGQVDDIDHLKNRRVRCAGELIQSQLRIGLNRLERTMQGRISRPGELPGMSSLMNPKPVMAALREFFGSNPLSQFMDQTNPLAELTHKRRLSSLGPGGLSQDRAGMAVREIHPSQYGRICPIETPEGPNAGLIGSMATYARLNQYGGLECPFYQVVEGKVLYEFGPIFLTAEQEDQVTVVAGDILDQRKLMVAVAEGRDPLDPAVRPTLPDRPLILRSRQEFHTGSFRDVNYVGIAPTQMISVATSLIPFLEHDDANRALMGSNMQRQAVPLLKTEAPIIGTGLEAQVAADAGGVVQSPFEGIVVYVDATRIVVSTSKSKLALSKKRKIHESNVFLQVYQRSNQGTCIHQRPIIPLHTPVIRGDLLADGSSTSGGQIALGKNLLVAYMPWEGYNFEDAILISERLIYDDLYTSLHIERYEVETQHTKLGPEEITKSIVHETDDKLPYRWLDERGIVMRGAWVEPGDVLIGKITPKEEKELTPELRLVYAIFGKRPKGFRDTSLRVPQGVRGRVVDVRMIRDEDTKVVHVYVCQQRQIQVGDKMAGRHGNKGIVSRIVPRQDMPYLQDGTPVDMVLNPLGVPSRMNVGQVFECLLGLAGQRLGQQLKVRAFDEMYGAEASRHLVYNKLHEASEVTGHHWLFDPNHPGKSRLIDGRTGDMFDQAVTIGQAYMLKLIHQVDDKIHARATGPYSLITQQPLGGRSKRGGQRLGEMEVWAFEGFGAAYTLQELLTVKSDDMQGRNEIMSAMVQGRQLPEMGTPESFKVMIRELQALCLDIGIYHRSKMTFKTEEIDLMQMR</sequence>
<gene>
    <name evidence="1" type="primary">rpoB</name>
</gene>
<comment type="function">
    <text evidence="1">DNA-dependent RNA polymerase catalyzes the transcription of DNA into RNA using the four ribonucleoside triphosphates as substrates.</text>
</comment>
<comment type="catalytic activity">
    <reaction evidence="1">
        <text>RNA(n) + a ribonucleoside 5'-triphosphate = RNA(n+1) + diphosphate</text>
        <dbReference type="Rhea" id="RHEA:21248"/>
        <dbReference type="Rhea" id="RHEA-COMP:14527"/>
        <dbReference type="Rhea" id="RHEA-COMP:17342"/>
        <dbReference type="ChEBI" id="CHEBI:33019"/>
        <dbReference type="ChEBI" id="CHEBI:61557"/>
        <dbReference type="ChEBI" id="CHEBI:140395"/>
        <dbReference type="EC" id="2.7.7.6"/>
    </reaction>
</comment>
<comment type="subunit">
    <text evidence="1">In plastids the minimal PEP RNA polymerase catalytic core is composed of four subunits: alpha, beta, beta', and beta''. When a (nuclear-encoded) sigma factor is associated with the core the holoenzyme is formed, which can initiate transcription.</text>
</comment>
<comment type="subcellular location">
    <subcellularLocation>
        <location>Plastid</location>
        <location>Chloroplast</location>
    </subcellularLocation>
</comment>
<comment type="similarity">
    <text evidence="1">Belongs to the RNA polymerase beta chain family.</text>
</comment>
<feature type="chain" id="PRO_0000048032" description="DNA-directed RNA polymerase subunit beta">
    <location>
        <begin position="1"/>
        <end position="1109"/>
    </location>
</feature>
<name>RPOB_NEPOL</name>
<reference key="1">
    <citation type="journal article" date="1999" name="Proc. Natl. Acad. Sci. U.S.A.">
        <title>The complete chloroplast DNA sequence of the green alga Nephroselmis olivacea: insights into the architecture of ancestral chloroplast genomes.</title>
        <authorList>
            <person name="Turmel M."/>
            <person name="Otis C."/>
            <person name="Lemieux C."/>
        </authorList>
    </citation>
    <scope>NUCLEOTIDE SEQUENCE [LARGE SCALE GENOMIC DNA]</scope>
    <source>
        <strain>NIES-484 / S-N-5-8</strain>
    </source>
</reference>
<evidence type="ECO:0000255" key="1">
    <source>
        <dbReference type="HAMAP-Rule" id="MF_01321"/>
    </source>
</evidence>
<proteinExistence type="inferred from homology"/>
<protein>
    <recommendedName>
        <fullName evidence="1">DNA-directed RNA polymerase subunit beta</fullName>
        <ecNumber evidence="1">2.7.7.6</ecNumber>
    </recommendedName>
    <alternativeName>
        <fullName evidence="1">PEP</fullName>
    </alternativeName>
    <alternativeName>
        <fullName evidence="1">Plastid-encoded RNA polymerase subunit beta</fullName>
        <shortName evidence="1">RNA polymerase subunit beta</shortName>
    </alternativeName>
</protein>